<dbReference type="EC" id="3.6.5.-" evidence="3"/>
<dbReference type="EMBL" id="AY587019">
    <property type="protein sequence ID" value="AAS97961.1"/>
    <property type="molecule type" value="mRNA"/>
</dbReference>
<dbReference type="EMBL" id="AB022217">
    <property type="protein sequence ID" value="BAB02753.1"/>
    <property type="molecule type" value="Genomic_DNA"/>
</dbReference>
<dbReference type="EMBL" id="CP002686">
    <property type="protein sequence ID" value="AEE75844.1"/>
    <property type="molecule type" value="Genomic_DNA"/>
</dbReference>
<dbReference type="EMBL" id="AK229133">
    <property type="protein sequence ID" value="BAF01007.1"/>
    <property type="molecule type" value="mRNA"/>
</dbReference>
<dbReference type="RefSeq" id="NP_188284.1">
    <property type="nucleotide sequence ID" value="NM_112535.4"/>
</dbReference>
<dbReference type="SMR" id="Q9LUS2"/>
<dbReference type="BioGRID" id="6247">
    <property type="interactions" value="3"/>
</dbReference>
<dbReference type="FunCoup" id="Q9LUS2">
    <property type="interactions" value="1152"/>
</dbReference>
<dbReference type="IntAct" id="Q9LUS2">
    <property type="interactions" value="4"/>
</dbReference>
<dbReference type="STRING" id="3702.Q9LUS2"/>
<dbReference type="GlyGen" id="Q9LUS2">
    <property type="glycosylation" value="1 site"/>
</dbReference>
<dbReference type="iPTMnet" id="Q9LUS2"/>
<dbReference type="PaxDb" id="3702-AT3G16620.1"/>
<dbReference type="ProteomicsDB" id="234207"/>
<dbReference type="EnsemblPlants" id="AT3G16620.1">
    <property type="protein sequence ID" value="AT3G16620.1"/>
    <property type="gene ID" value="AT3G16620"/>
</dbReference>
<dbReference type="GeneID" id="820913"/>
<dbReference type="Gramene" id="AT3G16620.1">
    <property type="protein sequence ID" value="AT3G16620.1"/>
    <property type="gene ID" value="AT3G16620"/>
</dbReference>
<dbReference type="KEGG" id="ath:AT3G16620"/>
<dbReference type="Araport" id="AT3G16620"/>
<dbReference type="TAIR" id="AT3G16620">
    <property type="gene designation" value="TOC120"/>
</dbReference>
<dbReference type="eggNOG" id="ENOG502QR60">
    <property type="taxonomic scope" value="Eukaryota"/>
</dbReference>
<dbReference type="HOGENOM" id="CLU_003856_0_0_1"/>
<dbReference type="InParanoid" id="Q9LUS2"/>
<dbReference type="OMA" id="TKLENRW"/>
<dbReference type="PhylomeDB" id="Q9LUS2"/>
<dbReference type="PRO" id="PR:Q9LUS2"/>
<dbReference type="Proteomes" id="UP000006548">
    <property type="component" value="Chromosome 3"/>
</dbReference>
<dbReference type="ExpressionAtlas" id="Q9LUS2">
    <property type="expression patterns" value="baseline and differential"/>
</dbReference>
<dbReference type="GO" id="GO:0009707">
    <property type="term" value="C:chloroplast outer membrane"/>
    <property type="evidence" value="ECO:0000314"/>
    <property type="project" value="TAIR"/>
</dbReference>
<dbReference type="GO" id="GO:0009536">
    <property type="term" value="C:plastid"/>
    <property type="evidence" value="ECO:0007005"/>
    <property type="project" value="TAIR"/>
</dbReference>
<dbReference type="GO" id="GO:0005525">
    <property type="term" value="F:GTP binding"/>
    <property type="evidence" value="ECO:0007669"/>
    <property type="project" value="UniProtKB-KW"/>
</dbReference>
<dbReference type="GO" id="GO:0003924">
    <property type="term" value="F:GTPase activity"/>
    <property type="evidence" value="ECO:0007669"/>
    <property type="project" value="InterPro"/>
</dbReference>
<dbReference type="GO" id="GO:0046872">
    <property type="term" value="F:metal ion binding"/>
    <property type="evidence" value="ECO:0007669"/>
    <property type="project" value="UniProtKB-KW"/>
</dbReference>
<dbReference type="GO" id="GO:0045036">
    <property type="term" value="P:protein targeting to chloroplast"/>
    <property type="evidence" value="ECO:0000314"/>
    <property type="project" value="TAIR"/>
</dbReference>
<dbReference type="GO" id="GO:0015031">
    <property type="term" value="P:protein transport"/>
    <property type="evidence" value="ECO:0007669"/>
    <property type="project" value="UniProtKB-KW"/>
</dbReference>
<dbReference type="CDD" id="cd01853">
    <property type="entry name" value="Toc34_like"/>
    <property type="match status" value="1"/>
</dbReference>
<dbReference type="FunFam" id="3.40.50.300:FF:000413">
    <property type="entry name" value="Translocase of chloroplast 120, chloroplastic"/>
    <property type="match status" value="1"/>
</dbReference>
<dbReference type="Gene3D" id="3.40.50.300">
    <property type="entry name" value="P-loop containing nucleotide triphosphate hydrolases"/>
    <property type="match status" value="1"/>
</dbReference>
<dbReference type="InterPro" id="IPR006703">
    <property type="entry name" value="G_AIG1"/>
</dbReference>
<dbReference type="InterPro" id="IPR045058">
    <property type="entry name" value="GIMA/IAN/Toc"/>
</dbReference>
<dbReference type="InterPro" id="IPR027417">
    <property type="entry name" value="P-loop_NTPase"/>
</dbReference>
<dbReference type="InterPro" id="IPR024283">
    <property type="entry name" value="TOC159_MAD"/>
</dbReference>
<dbReference type="InterPro" id="IPR005690">
    <property type="entry name" value="Toc86_159"/>
</dbReference>
<dbReference type="NCBIfam" id="TIGR00993">
    <property type="entry name" value="3a0901s04IAP86"/>
    <property type="match status" value="1"/>
</dbReference>
<dbReference type="PANTHER" id="PTHR10903">
    <property type="entry name" value="GTPASE, IMAP FAMILY MEMBER-RELATED"/>
    <property type="match status" value="1"/>
</dbReference>
<dbReference type="PANTHER" id="PTHR10903:SF135">
    <property type="entry name" value="TRANSLOCASE OF CHLOROPLAST 120, CHLOROPLASTIC-RELATED"/>
    <property type="match status" value="1"/>
</dbReference>
<dbReference type="Pfam" id="PF04548">
    <property type="entry name" value="AIG1"/>
    <property type="match status" value="1"/>
</dbReference>
<dbReference type="Pfam" id="PF11886">
    <property type="entry name" value="TOC159_MAD"/>
    <property type="match status" value="1"/>
</dbReference>
<dbReference type="SUPFAM" id="SSF52540">
    <property type="entry name" value="P-loop containing nucleoside triphosphate hydrolases"/>
    <property type="match status" value="1"/>
</dbReference>
<dbReference type="PROSITE" id="PS51720">
    <property type="entry name" value="G_AIG1"/>
    <property type="match status" value="1"/>
</dbReference>
<name>TC120_ARATH</name>
<sequence>MGDGAEIVTRLYGDEKKLAEDGRISELVGSDEVKDNEEEVFEEAIGSQEGLKPESLKTDVLQEDFPLASNDEVCDLEETSRNERGVENLKVNYSEIGESHGEVNEQCITTKEADSDLVTLKMNDYDHGEVADADISYGKMASSLDVVENSEKATSNLATEDVNLENGNTHSSSENGVVSPDENKELVAEVISVSACSVETGSNGIDDEKWEEEIDVSAGMVTEQRNGKTGAEFNSVKIVSGDKSLNDSIEVAAGTLSPLEKSSSEEKGETESQNSNGGHDIQSNKEIVKQQDSSVNIGPEIKESQHMERESEVLSSVSPTESRSDTAALPPARPAGLGRAAPLLEPAPRVTQQPRVNGNVSHNQPQQAEDSTTAETDEHDETREKLQFIRVKFLRLSHRLGQTPHNVVVAQVLYRLGLAEQLRGRNGSRVGAFSFDRASAMAEQLEAAAQDPLDFSCTIMVLGKSGVGKSATINSIFDELKISTDAFQVGTKKVQDIEGFVQGIKVRVIDTPGLLPSWSDQHKNEKILKSVRAFIKKSPPDIVLYLDRLDMQSRDSGDMPLLRTITDVFGPSIWFNAIVGLTHAASAPPDGPNGTASSYDMFVTQRSHVIQQAIRQAAGDMRLMNPVSLVENHSACRTNRAGQRVLPNGQVWKPHLLLLSFASKILAEANALLKLQDNIPGGQFATRSKAPPLPLLLSSLLQSRPQAKLPEQQYDDEDDEDDLDESSDSEEESEYDELPPFKRLTKAEMTKLSKSQKKEYLDEMEYREKLFMKRQMKEERKRRKLLKKFAAEIKDMPNGYSENVEEERSEPASVPVPMPDLSLPASFDSDNPTHRYRYLDTSNQWLVRPVLETHGWDHDIGYEGVNAERLFVVKDKIPVSFSGQVTKDKKDAHVQLELASSVKHGEGRSTSLGFDMQNAGKELAYTIRSETRFNKFRKNKAAAGLSVTLLGDSVSAGLKVEDKLIANKRFRMVMSGGAMTSRGDVAYGGTLEAQFRDKDYPLGRFLSTLGLSVMDWHGDLAIGGNIQSQVPIGRSSNLIARANLNNRGAGQVSIRVNSSEQLQLAVVALVPLFKKLLTYYSPEQMQYGH</sequence>
<evidence type="ECO:0000250" key="1"/>
<evidence type="ECO:0000250" key="2">
    <source>
        <dbReference type="UniProtKB" id="O23680"/>
    </source>
</evidence>
<evidence type="ECO:0000250" key="3">
    <source>
        <dbReference type="UniProtKB" id="O81283"/>
    </source>
</evidence>
<evidence type="ECO:0000250" key="4">
    <source>
        <dbReference type="UniProtKB" id="Q9SLF3"/>
    </source>
</evidence>
<evidence type="ECO:0000255" key="5"/>
<evidence type="ECO:0000255" key="6">
    <source>
        <dbReference type="PROSITE-ProRule" id="PRU01057"/>
    </source>
</evidence>
<evidence type="ECO:0000256" key="7">
    <source>
        <dbReference type="SAM" id="MobiDB-lite"/>
    </source>
</evidence>
<evidence type="ECO:0000269" key="8">
    <source>
    </source>
</evidence>
<evidence type="ECO:0000269" key="9">
    <source>
    </source>
</evidence>
<evidence type="ECO:0000269" key="10">
    <source>
    </source>
</evidence>
<evidence type="ECO:0000303" key="11">
    <source>
    </source>
</evidence>
<evidence type="ECO:0000305" key="12"/>
<evidence type="ECO:0000312" key="13">
    <source>
        <dbReference type="Araport" id="AT3G16620"/>
    </source>
</evidence>
<evidence type="ECO:0000312" key="14">
    <source>
        <dbReference type="EMBL" id="BAB02753.1"/>
    </source>
</evidence>
<organism>
    <name type="scientific">Arabidopsis thaliana</name>
    <name type="common">Mouse-ear cress</name>
    <dbReference type="NCBI Taxonomy" id="3702"/>
    <lineage>
        <taxon>Eukaryota</taxon>
        <taxon>Viridiplantae</taxon>
        <taxon>Streptophyta</taxon>
        <taxon>Embryophyta</taxon>
        <taxon>Tracheophyta</taxon>
        <taxon>Spermatophyta</taxon>
        <taxon>Magnoliopsida</taxon>
        <taxon>eudicotyledons</taxon>
        <taxon>Gunneridae</taxon>
        <taxon>Pentapetalae</taxon>
        <taxon>rosids</taxon>
        <taxon>malvids</taxon>
        <taxon>Brassicales</taxon>
        <taxon>Brassicaceae</taxon>
        <taxon>Camelineae</taxon>
        <taxon>Arabidopsis</taxon>
    </lineage>
</organism>
<proteinExistence type="evidence at protein level"/>
<protein>
    <recommendedName>
        <fullName evidence="11">Translocase of chloroplast 120, chloroplastic</fullName>
        <shortName evidence="11">AtToc120</shortName>
        <ecNumber evidence="3">3.6.5.-</ecNumber>
    </recommendedName>
    <alternativeName>
        <fullName evidence="11">120 kDa chloroplast outer envelope protein</fullName>
    </alternativeName>
</protein>
<feature type="initiator methionine" description="Removed" evidence="4">
    <location>
        <position position="1"/>
    </location>
</feature>
<feature type="chain" id="PRO_0000352657" description="Translocase of chloroplast 120, chloroplastic">
    <location>
        <begin position="2"/>
        <end position="1089"/>
    </location>
</feature>
<feature type="transmembrane region" description="Helical" evidence="5">
    <location>
        <begin position="1064"/>
        <end position="1080"/>
    </location>
</feature>
<feature type="domain" description="AIG1-type G" evidence="6">
    <location>
        <begin position="454"/>
        <end position="683"/>
    </location>
</feature>
<feature type="region of interest" description="Disordered" evidence="7">
    <location>
        <begin position="158"/>
        <end position="179"/>
    </location>
</feature>
<feature type="region of interest" description="Disordered" evidence="7">
    <location>
        <begin position="255"/>
        <end position="339"/>
    </location>
</feature>
<feature type="region of interest" description="Disordered" evidence="7">
    <location>
        <begin position="353"/>
        <end position="381"/>
    </location>
</feature>
<feature type="region of interest" description="G1" evidence="6">
    <location>
        <begin position="463"/>
        <end position="470"/>
    </location>
</feature>
<feature type="region of interest" description="Homodimerization" evidence="1">
    <location>
        <begin position="485"/>
        <end position="488"/>
    </location>
</feature>
<feature type="region of interest" description="G2" evidence="6">
    <location>
        <begin position="489"/>
        <end position="493"/>
    </location>
</feature>
<feature type="region of interest" description="G3" evidence="6">
    <location>
        <begin position="510"/>
        <end position="513"/>
    </location>
</feature>
<feature type="region of interest" description="Homodimerization" evidence="1">
    <location>
        <begin position="548"/>
        <end position="553"/>
    </location>
</feature>
<feature type="region of interest" description="G4" evidence="6">
    <location>
        <begin position="582"/>
        <end position="585"/>
    </location>
</feature>
<feature type="region of interest" description="G5" evidence="6">
    <location>
        <begin position="631"/>
        <end position="633"/>
    </location>
</feature>
<feature type="region of interest" description="Disordered" evidence="7">
    <location>
        <begin position="710"/>
        <end position="748"/>
    </location>
</feature>
<feature type="coiled-coil region" evidence="5">
    <location>
        <begin position="767"/>
        <end position="788"/>
    </location>
</feature>
<feature type="compositionally biased region" description="Polar residues" evidence="7">
    <location>
        <begin position="165"/>
        <end position="176"/>
    </location>
</feature>
<feature type="compositionally biased region" description="Basic and acidic residues" evidence="7">
    <location>
        <begin position="300"/>
        <end position="312"/>
    </location>
</feature>
<feature type="compositionally biased region" description="Low complexity" evidence="7">
    <location>
        <begin position="327"/>
        <end position="339"/>
    </location>
</feature>
<feature type="compositionally biased region" description="Polar residues" evidence="7">
    <location>
        <begin position="353"/>
        <end position="374"/>
    </location>
</feature>
<feature type="compositionally biased region" description="Acidic residues" evidence="7">
    <location>
        <begin position="713"/>
        <end position="737"/>
    </location>
</feature>
<feature type="binding site" evidence="1">
    <location>
        <begin position="466"/>
        <end position="471"/>
    </location>
    <ligand>
        <name>GTP</name>
        <dbReference type="ChEBI" id="CHEBI:37565"/>
    </ligand>
</feature>
<feature type="binding site" evidence="1">
    <location>
        <position position="470"/>
    </location>
    <ligand>
        <name>Mg(2+)</name>
        <dbReference type="ChEBI" id="CHEBI:18420"/>
    </ligand>
</feature>
<feature type="binding site" evidence="1">
    <location>
        <begin position="485"/>
        <end position="490"/>
    </location>
    <ligand>
        <name>GTP</name>
        <dbReference type="ChEBI" id="CHEBI:37565"/>
    </ligand>
</feature>
<feature type="binding site" evidence="1">
    <location>
        <position position="583"/>
    </location>
    <ligand>
        <name>GTP</name>
        <dbReference type="ChEBI" id="CHEBI:37565"/>
    </ligand>
</feature>
<feature type="binding site" evidence="1">
    <location>
        <begin position="631"/>
        <end position="632"/>
    </location>
    <ligand>
        <name>GTP</name>
        <dbReference type="ChEBI" id="CHEBI:37565"/>
    </ligand>
</feature>
<feature type="modified residue" description="N-acetylglycine" evidence="4">
    <location>
        <position position="2"/>
    </location>
</feature>
<feature type="modified residue" description="Phosphoserine" evidence="4">
    <location>
        <position position="179"/>
    </location>
</feature>
<feature type="modified residue" description="Phosphoserine" evidence="3">
    <location>
        <position position="263"/>
    </location>
</feature>
<feature type="modified residue" description="Phosphoserine" evidence="3">
    <location>
        <position position="283"/>
    </location>
</feature>
<reference key="1">
    <citation type="journal article" date="2000" name="Nature">
        <title>The major protein import receptor of plastids is essential for chloroplast biogenesis.</title>
        <authorList>
            <person name="Bauer J."/>
            <person name="Chen K."/>
            <person name="Hiltbunner A."/>
            <person name="Wehrli E."/>
            <person name="Eugster M."/>
            <person name="Schnell D."/>
            <person name="Kessler F."/>
        </authorList>
    </citation>
    <scope>NUCLEOTIDE SEQUENCE [MRNA]</scope>
    <scope>INTERACTION WITH THE TOC COMPLEX</scope>
    <scope>INDUCTION BY LIGHT</scope>
</reference>
<reference key="2">
    <citation type="journal article" date="2000" name="DNA Res.">
        <title>Structural analysis of Arabidopsis thaliana chromosome 3. I. Sequence features of the regions of 4,504,864 bp covered by sixty P1 and TAC clones.</title>
        <authorList>
            <person name="Sato S."/>
            <person name="Nakamura Y."/>
            <person name="Kaneko T."/>
            <person name="Katoh T."/>
            <person name="Asamizu E."/>
            <person name="Tabata S."/>
        </authorList>
    </citation>
    <scope>NUCLEOTIDE SEQUENCE [LARGE SCALE GENOMIC DNA]</scope>
    <source>
        <strain>cv. Columbia</strain>
    </source>
</reference>
<reference key="3">
    <citation type="journal article" date="2017" name="Plant J.">
        <title>Araport11: a complete reannotation of the Arabidopsis thaliana reference genome.</title>
        <authorList>
            <person name="Cheng C.Y."/>
            <person name="Krishnakumar V."/>
            <person name="Chan A.P."/>
            <person name="Thibaud-Nissen F."/>
            <person name="Schobel S."/>
            <person name="Town C.D."/>
        </authorList>
    </citation>
    <scope>GENOME REANNOTATION</scope>
    <source>
        <strain>cv. Columbia</strain>
    </source>
</reference>
<reference key="4">
    <citation type="journal article" date="2004" name="Plant Cell">
        <title>Functional specialization amongst the Arabidopsis Toc159 family of chloroplast protein import receptors.</title>
        <authorList>
            <person name="Kubis S."/>
            <person name="Patel R."/>
            <person name="Combe J."/>
            <person name="Bedard J."/>
            <person name="Kovacheva S."/>
            <person name="Lilley K."/>
            <person name="Biehl A."/>
            <person name="Leister D."/>
            <person name="Rios G."/>
            <person name="Koncz C."/>
            <person name="Jarvis P."/>
        </authorList>
    </citation>
    <scope>FUNCTION</scope>
    <scope>TISSUE SPECIFICITY</scope>
</reference>
<reference key="5">
    <citation type="submission" date="2006-07" db="EMBL/GenBank/DDBJ databases">
        <title>Large-scale analysis of RIKEN Arabidopsis full-length (RAFL) cDNAs.</title>
        <authorList>
            <person name="Totoki Y."/>
            <person name="Seki M."/>
            <person name="Ishida J."/>
            <person name="Nakajima M."/>
            <person name="Enju A."/>
            <person name="Kamiya A."/>
            <person name="Narusaka M."/>
            <person name="Shin-i T."/>
            <person name="Nakagawa M."/>
            <person name="Sakamoto N."/>
            <person name="Oishi K."/>
            <person name="Kohara Y."/>
            <person name="Kobayashi M."/>
            <person name="Toyoda A."/>
            <person name="Sakaki Y."/>
            <person name="Sakurai T."/>
            <person name="Iida K."/>
            <person name="Akiyama K."/>
            <person name="Satou M."/>
            <person name="Toyoda T."/>
            <person name="Konagaya A."/>
            <person name="Carninci P."/>
            <person name="Kawai J."/>
            <person name="Hayashizaki Y."/>
            <person name="Shinozaki K."/>
        </authorList>
    </citation>
    <scope>NUCLEOTIDE SEQUENCE [LARGE SCALE MRNA]</scope>
    <source>
        <strain>cv. Columbia</strain>
    </source>
</reference>
<reference key="6">
    <citation type="journal article" date="2017" name="J. Biol. Chem.">
        <title>The novel chloroplast outer membrane kinase KOC1 is a required component of the plastid protein import machinery.</title>
        <authorList>
            <person name="Zufferey M."/>
            <person name="Montandon C."/>
            <person name="Douet V."/>
            <person name="Demarsy E."/>
            <person name="Agne B."/>
            <person name="Baginsky S."/>
            <person name="Kessler F."/>
        </authorList>
    </citation>
    <scope>PHOSPHORYLATION BY KOC1</scope>
    <source>
        <strain>cv. Columbia</strain>
    </source>
</reference>
<gene>
    <name evidence="11" type="primary">TOC120</name>
    <name evidence="13" type="ordered locus">At3g16620</name>
    <name evidence="14" type="ORF">MGL6.15</name>
</gene>
<keyword id="KW-0007">Acetylation</keyword>
<keyword id="KW-0150">Chloroplast</keyword>
<keyword id="KW-0175">Coiled coil</keyword>
<keyword id="KW-0963">Cytoplasm</keyword>
<keyword id="KW-0342">GTP-binding</keyword>
<keyword id="KW-0378">Hydrolase</keyword>
<keyword id="KW-0460">Magnesium</keyword>
<keyword id="KW-0472">Membrane</keyword>
<keyword id="KW-0479">Metal-binding</keyword>
<keyword id="KW-0547">Nucleotide-binding</keyword>
<keyword id="KW-0597">Phosphoprotein</keyword>
<keyword id="KW-0934">Plastid</keyword>
<keyword id="KW-1002">Plastid outer membrane</keyword>
<keyword id="KW-0653">Protein transport</keyword>
<keyword id="KW-0675">Receptor</keyword>
<keyword id="KW-1185">Reference proteome</keyword>
<keyword id="KW-0812">Transmembrane</keyword>
<keyword id="KW-1133">Transmembrane helix</keyword>
<keyword id="KW-0813">Transport</keyword>
<accession>Q9LUS2</accession>
<comment type="function">
    <text evidence="9">GTPase involved in protein precursor import into chloroplasts. Seems to recognize chloroplast-destined precursor proteins and regulate their presentation to the translocation channel through GTP hydrolysis. Probably specialized in the import of nuclear encoded non-photosynthetic preproteins from the cytoplasm to the chloroplast.</text>
</comment>
<comment type="cofactor">
    <cofactor evidence="2">
        <name>Mg(2+)</name>
        <dbReference type="ChEBI" id="CHEBI:18420"/>
    </cofactor>
    <text evidence="2">Binds 1 Mg(2+) ion by subunit.</text>
</comment>
<comment type="subunit">
    <text evidence="3 8">Homodimer (By similarity). Part of the TOC core complex that includes 1 protein for the specific recognition of transit peptides surrounded by a ring composed of four proteins forming translocation channels, and four to five GTP-binding proteins providing energy. This core complex can interact with components of the TIC complex to form a larger import complex. Chloroplastic protein precursor such as prSS (precursor of the RuBisCO small subunit) interacts with these complexes. The TOC complex contains a specific subset of polar lipids such as digalactosyldiacylglyceride (DGDG), phosphatidylcholine (PC) and phosphatidylglycerol (PG).</text>
</comment>
<comment type="subcellular location">
    <subcellularLocation>
        <location evidence="2">Plastid</location>
        <location evidence="2">Chloroplast outer membrane</location>
        <topology evidence="2">Single-pass membrane protein</topology>
    </subcellularLocation>
    <subcellularLocation>
        <location evidence="1">Cytoplasm</location>
    </subcellularLocation>
    <text evidence="1">Cycles between the cytoplasm and chloroplast, probably as a soluble preprotein receptor. The anchoring to the chloroplast outer membrane required the GTPase activity and GDP. May contain beta barrel transmembrane regions (By similarity).</text>
</comment>
<comment type="tissue specificity">
    <text evidence="9">Expressed in seedlings, flowers, and roots.</text>
</comment>
<comment type="induction">
    <text evidence="8">By light conditions.</text>
</comment>
<comment type="PTM">
    <text evidence="10">Phosphorylated by KOC1.</text>
</comment>
<comment type="similarity">
    <text evidence="12">Belongs to the TRAFAC class TrmE-Era-EngA-EngB-Septin-like GTPase superfamily. AIG1/Toc34/Toc159-like paraseptin GTPase family. TOC159 subfamily.</text>
</comment>